<organism>
    <name type="scientific">Conus textile</name>
    <name type="common">Cloth-of-gold cone</name>
    <dbReference type="NCBI Taxonomy" id="6494"/>
    <lineage>
        <taxon>Eukaryota</taxon>
        <taxon>Metazoa</taxon>
        <taxon>Spiralia</taxon>
        <taxon>Lophotrochozoa</taxon>
        <taxon>Mollusca</taxon>
        <taxon>Gastropoda</taxon>
        <taxon>Caenogastropoda</taxon>
        <taxon>Neogastropoda</taxon>
        <taxon>Conoidea</taxon>
        <taxon>Conidae</taxon>
        <taxon>Conus</taxon>
        <taxon>Cylinder</taxon>
    </lineage>
</organism>
<name>CA1A_CONTE</name>
<reference key="1">
    <citation type="patent" date="2002-10-22" number="US6797808">
        <title>Alpha-conotoxin peptides.</title>
        <authorList>
            <person name="Watkins M."/>
            <person name="Olivera B.M."/>
            <person name="Hillyard D.R."/>
            <person name="Mcintosh M.J."/>
            <person name="Jones R.M."/>
        </authorList>
    </citation>
    <scope>NUCLEOTIDE SEQUENCE [GENOMIC DNA]</scope>
</reference>
<reference key="2">
    <citation type="journal article" date="2007" name="EMBO J.">
        <title>AChBP-targeted alpha-conotoxin correlates distinct binding orientations with nAChR subtype selectivity.</title>
        <authorList>
            <person name="Dutertre S."/>
            <person name="Ulens C."/>
            <person name="Buettner R."/>
            <person name="Fish A."/>
            <person name="van Elk R."/>
            <person name="Kendel Y."/>
            <person name="Hopping G."/>
            <person name="Alewood P.F."/>
            <person name="Schroeder C."/>
            <person name="Nicke A."/>
            <person name="Smit A.B."/>
            <person name="Sixma T.K."/>
            <person name="Lewis R.J."/>
        </authorList>
    </citation>
    <scope>PROTEIN SEQUENCE OF 40-55</scope>
    <scope>FUNCTION</scope>
    <scope>MASS SPECTROMETRY</scope>
    <scope>SUBCELLULAR LOCATION</scope>
    <scope>AMIDATION AT CYS-55</scope>
    <scope>X-RAY CRYSTALLOGRAPHY (2.4 ANGSTROMS) OF [A10L]-TXIA IN COMPLEX WITH SOLUBLE ACETYLCHOLINE RECEPTOR</scope>
    <scope>MUTAGENESIS OF ALA-49</scope>
</reference>
<reference key="3">
    <citation type="journal article" date="2012" name="Toxicon">
        <title>Secretion and maturation of conotoxins in the venom ducts of Conus textile.</title>
        <authorList>
            <person name="Dobson R."/>
            <person name="Collodoro M."/>
            <person name="Gilles N."/>
            <person name="Turtoi A."/>
            <person name="De Pauw E."/>
            <person name="Quinton L."/>
        </authorList>
    </citation>
    <scope>IDENTIFICATION BY MASS SPECTROMETRY</scope>
    <scope>TISSUE SPECIFICITY</scope>
    <scope>POSITION IN VENOM DUCT</scope>
    <scope>HYDROXYLATION AT PRO-45 AND PRO-46</scope>
    <scope>AMIDATION AT CYS-55</scope>
    <source>
        <tissue>Venom</tissue>
    </source>
</reference>
<accession>P0DM21</accession>
<protein>
    <recommendedName>
        <fullName evidence="5">Alpha-conotoxin TxIA</fullName>
    </recommendedName>
    <alternativeName>
        <fullName evidence="6">Conotoxin tx1a</fullName>
    </alternativeName>
</protein>
<proteinExistence type="evidence at protein level"/>
<evidence type="ECO:0000250" key="1">
    <source>
        <dbReference type="UniProtKB" id="P56636"/>
    </source>
</evidence>
<evidence type="ECO:0000255" key="2"/>
<evidence type="ECO:0000269" key="3">
    <source>
    </source>
</evidence>
<evidence type="ECO:0000269" key="4">
    <source>
    </source>
</evidence>
<evidence type="ECO:0000303" key="5">
    <source>
    </source>
</evidence>
<evidence type="ECO:0000303" key="6">
    <source>
    </source>
</evidence>
<evidence type="ECO:0000305" key="7"/>
<evidence type="ECO:0000305" key="8">
    <source>
    </source>
</evidence>
<evidence type="ECO:0000305" key="9">
    <source>
    </source>
</evidence>
<evidence type="ECO:0007829" key="10">
    <source>
        <dbReference type="PDB" id="6OTA"/>
    </source>
</evidence>
<dbReference type="EMBL" id="BD261399">
    <property type="status" value="NOT_ANNOTATED_CDS"/>
    <property type="molecule type" value="Unassigned_DNA"/>
</dbReference>
<dbReference type="EMBL" id="AR584806">
    <property type="status" value="NOT_ANNOTATED_CDS"/>
    <property type="molecule type" value="Genomic_DNA"/>
</dbReference>
<dbReference type="PDB" id="2UZ6">
    <property type="method" value="X-ray"/>
    <property type="resolution" value="2.40 A"/>
    <property type="chains" value="K/L/M/N/O/P/Q/R/S/T=40-55"/>
</dbReference>
<dbReference type="PDB" id="6OTA">
    <property type="method" value="NMR"/>
    <property type="chains" value="A=40-55"/>
</dbReference>
<dbReference type="PDBsum" id="2UZ6"/>
<dbReference type="PDBsum" id="6OTA"/>
<dbReference type="BMRB" id="P0DM21"/>
<dbReference type="SMR" id="P0DM21"/>
<dbReference type="GO" id="GO:0005576">
    <property type="term" value="C:extracellular region"/>
    <property type="evidence" value="ECO:0007669"/>
    <property type="project" value="UniProtKB-SubCell"/>
</dbReference>
<dbReference type="GO" id="GO:0035792">
    <property type="term" value="C:host cell postsynaptic membrane"/>
    <property type="evidence" value="ECO:0007669"/>
    <property type="project" value="UniProtKB-KW"/>
</dbReference>
<dbReference type="GO" id="GO:0030550">
    <property type="term" value="F:acetylcholine receptor inhibitor activity"/>
    <property type="evidence" value="ECO:0007669"/>
    <property type="project" value="UniProtKB-KW"/>
</dbReference>
<dbReference type="GO" id="GO:0090729">
    <property type="term" value="F:toxin activity"/>
    <property type="evidence" value="ECO:0007669"/>
    <property type="project" value="UniProtKB-KW"/>
</dbReference>
<dbReference type="InterPro" id="IPR009958">
    <property type="entry name" value="Conotoxin_a-typ"/>
</dbReference>
<dbReference type="Pfam" id="PF07365">
    <property type="entry name" value="Toxin_8"/>
    <property type="match status" value="1"/>
</dbReference>
<sequence length="56" mass="5791">MFTVFLLVVLATAVVSFTSDRASDDGKAAASDLITLTIKGCCSRPPCIANNPDLCG</sequence>
<keyword id="KW-0002">3D-structure</keyword>
<keyword id="KW-0008">Acetylcholine receptor inhibiting toxin</keyword>
<keyword id="KW-0027">Amidation</keyword>
<keyword id="KW-0903">Direct protein sequencing</keyword>
<keyword id="KW-1015">Disulfide bond</keyword>
<keyword id="KW-0379">Hydroxylation</keyword>
<keyword id="KW-0528">Neurotoxin</keyword>
<keyword id="KW-0629">Postsynaptic neurotoxin</keyword>
<keyword id="KW-0964">Secreted</keyword>
<keyword id="KW-0732">Signal</keyword>
<keyword id="KW-0800">Toxin</keyword>
<comment type="function">
    <text evidence="3">Alpha-conotoxins act on postsynaptic membranes, they bind to the nicotinic acetylcholine receptors (nAChR) and thus inhibit them. This toxin inhibits rat alpha-3-beta-2/CHRNA3-CHRNB2 (IC(50)=3.5 nM), rat alpha-7/CHRNA7 (IC(50)=392 nM) nAChR, and the L.stagnalis soluble acetylcholine receptor (all tested without hydroxyproline).</text>
</comment>
<comment type="subcellular location">
    <subcellularLocation>
        <location evidence="3">Secreted</location>
    </subcellularLocation>
</comment>
<comment type="tissue specificity">
    <text evidence="8 9">Expressed by the venom duct (PubMed:17660751, PubMed:23031820). Tx1a that containing 1 or 2 non-hydroxylated prolines are mostly present in part 5 of the venom duct (distal part near the pharynx), whereas tx1a-OO (with 2 hydroxyprolines) is mostly present in part 4 of the venom duct (follewed by part 3) (PubMed:23031820).</text>
</comment>
<comment type="domain">
    <text evidence="7">The cysteine framework is I (CC-C-C). Alpha4/7 pattern.</text>
</comment>
<comment type="PTM">
    <text evidence="4">Exists in 4 different forms, depending on hydroxylations. Tx1a-PP does not contain hydroxyproline, tx1a-OP has one hydroxyproline at position 45, tx1a-PO has one hydroxyproline at position 46, and tx1a-PP has two hydroxyprolines at positions 45 and 46.</text>
</comment>
<comment type="mass spectrometry" mass="1656.68" method="Electrospray" evidence="3">
    <text>Monoisotopic mass.</text>
</comment>
<comment type="miscellaneous">
    <text evidence="3">Shows no inhibition on alpha-4-beta-2/CHRNA4-CHRNB2 and on alpha-1-beta-1-delta-epsilon/CHRNA1-CHRNB1-CHRND-CHRNE up to 10 uM.</text>
</comment>
<comment type="miscellaneous">
    <text evidence="3">The toxin with a different disulfide pairing [C1-C4; C2-C3] shows an important loss of activity on L.stagnalis soluble acetylcholine receptor and a complete loss of activity on alpha-7/CHRNA7 nAChR, respectively.</text>
</comment>
<comment type="similarity">
    <text evidence="7">Belongs to the conotoxin A superfamily.</text>
</comment>
<feature type="signal peptide" evidence="2">
    <location>
        <begin position="1"/>
        <end position="16"/>
    </location>
</feature>
<feature type="propeptide" id="PRO_0000445008" evidence="3">
    <location>
        <begin position="17"/>
        <end position="39"/>
    </location>
</feature>
<feature type="peptide" id="PRO_0000445009" description="Alpha-conotoxin TxIA" evidence="3">
    <location>
        <begin position="40"/>
        <end position="55"/>
    </location>
</feature>
<feature type="region of interest" description="Ser-Xaa-Pro motif, crucial for potent interaction with nAChR" evidence="1">
    <location>
        <begin position="43"/>
        <end position="45"/>
    </location>
</feature>
<feature type="site" description="Important for binding with soluble acetylcholine receptor" evidence="8">
    <location>
        <position position="44"/>
    </location>
</feature>
<feature type="site" description="Important for binding with soluble acetylcholine receptor" evidence="8">
    <location>
        <position position="46"/>
    </location>
</feature>
<feature type="modified residue" description="4-hydroxyproline; partial" evidence="4">
    <location>
        <position position="45"/>
    </location>
</feature>
<feature type="modified residue" description="4-hydroxyproline; partial" evidence="4">
    <location>
        <position position="46"/>
    </location>
</feature>
<feature type="modified residue" description="Cysteine amide" evidence="3 4">
    <location>
        <position position="55"/>
    </location>
</feature>
<feature type="disulfide bond" evidence="8">
    <location>
        <begin position="41"/>
        <end position="47"/>
    </location>
</feature>
<feature type="disulfide bond" evidence="8">
    <location>
        <begin position="42"/>
        <end position="55"/>
    </location>
</feature>
<feature type="mutagenesis site" description="10-fold increase in ability to inhibit rat alpha-7/CHRNA7, and no change in ability to inhibit L.stagnalis soluble acetylcholine receptor (tested without hydroxyproline)." evidence="3">
    <original>A</original>
    <variation>L</variation>
    <location>
        <position position="49"/>
    </location>
</feature>
<feature type="strand" evidence="10">
    <location>
        <begin position="42"/>
        <end position="44"/>
    </location>
</feature>
<feature type="turn" evidence="10">
    <location>
        <begin position="45"/>
        <end position="48"/>
    </location>
</feature>